<sequence length="213" mass="23310">MELHVLNHPLVEHKLTVLRDKNTPSSIFRELVSELVMLEAYEATRNLSVVAAPIETPVAPMTGKKLAEPRPIIVPVLRAGLGMLDGMTRLMPTAEVGFLGMKRDEEHPTQQVTYANRLPEDLSGRQCFLIDPMLATGGTLVAATHYLAERGAKDVTAINIIAAPEGIKYVEEHIDPSIEFKVVVCAVDEKLNDKCYIVPGLGDAGDRLYGVID</sequence>
<reference key="1">
    <citation type="journal article" date="2008" name="Proc. Natl. Acad. Sci. U.S.A.">
        <title>The genome sequence of Bifidobacterium longum subsp. infantis reveals adaptations for milk utilization within the infant microbiome.</title>
        <authorList>
            <person name="Sela D.A."/>
            <person name="Chapman J."/>
            <person name="Adeuya A."/>
            <person name="Kim J.H."/>
            <person name="Chen F."/>
            <person name="Whitehead T.R."/>
            <person name="Lapidus A."/>
            <person name="Rokhsar D.S."/>
            <person name="Lebrilla C.B."/>
            <person name="German J.B."/>
            <person name="Price N.P."/>
            <person name="Richardson P.M."/>
            <person name="Mills D.A."/>
        </authorList>
    </citation>
    <scope>NUCLEOTIDE SEQUENCE [LARGE SCALE GENOMIC DNA]</scope>
    <source>
        <strain>ATCC 15697 / DSM 20088 / JCM 1222 / NCTC 11817 / S12</strain>
    </source>
</reference>
<reference key="2">
    <citation type="journal article" date="2011" name="Nature">
        <title>Bifidobacteria can protect from enteropathogenic infection through production of acetate.</title>
        <authorList>
            <person name="Fukuda S."/>
            <person name="Toh H."/>
            <person name="Hase K."/>
            <person name="Oshima K."/>
            <person name="Nakanishi Y."/>
            <person name="Yoshimura K."/>
            <person name="Tobe T."/>
            <person name="Clarke J.M."/>
            <person name="Topping D.L."/>
            <person name="Suzuki T."/>
            <person name="Taylor T.D."/>
            <person name="Itoh K."/>
            <person name="Kikuchi J."/>
            <person name="Morita H."/>
            <person name="Hattori M."/>
            <person name="Ohno H."/>
        </authorList>
    </citation>
    <scope>NUCLEOTIDE SEQUENCE [LARGE SCALE GENOMIC DNA]</scope>
    <source>
        <strain>ATCC 15697 / DSM 20088 / JCM 1222 / NCTC 11817 / S12</strain>
    </source>
</reference>
<proteinExistence type="inferred from homology"/>
<comment type="function">
    <text evidence="1">Catalyzes the conversion of uracil and 5-phospho-alpha-D-ribose 1-diphosphate (PRPP) to UMP and diphosphate.</text>
</comment>
<comment type="catalytic activity">
    <reaction evidence="1">
        <text>UMP + diphosphate = 5-phospho-alpha-D-ribose 1-diphosphate + uracil</text>
        <dbReference type="Rhea" id="RHEA:13017"/>
        <dbReference type="ChEBI" id="CHEBI:17568"/>
        <dbReference type="ChEBI" id="CHEBI:33019"/>
        <dbReference type="ChEBI" id="CHEBI:57865"/>
        <dbReference type="ChEBI" id="CHEBI:58017"/>
        <dbReference type="EC" id="2.4.2.9"/>
    </reaction>
</comment>
<comment type="cofactor">
    <cofactor evidence="1">
        <name>Mg(2+)</name>
        <dbReference type="ChEBI" id="CHEBI:18420"/>
    </cofactor>
    <text evidence="1">Binds 1 Mg(2+) ion per subunit. The magnesium is bound as Mg-PRPP.</text>
</comment>
<comment type="activity regulation">
    <text evidence="1">Allosterically activated by GTP.</text>
</comment>
<comment type="pathway">
    <text evidence="1">Pyrimidine metabolism; UMP biosynthesis via salvage pathway; UMP from uracil: step 1/1.</text>
</comment>
<comment type="similarity">
    <text evidence="1">Belongs to the UPRTase family.</text>
</comment>
<comment type="sequence caution" evidence="2">
    <conflict type="erroneous initiation">
        <sequence resource="EMBL-CDS" id="BAJ70013"/>
    </conflict>
    <text>Truncated N-terminus.</text>
</comment>
<protein>
    <recommendedName>
        <fullName evidence="1">Uracil phosphoribosyltransferase</fullName>
        <ecNumber evidence="1">2.4.2.9</ecNumber>
    </recommendedName>
    <alternativeName>
        <fullName evidence="1">UMP pyrophosphorylase</fullName>
    </alternativeName>
    <alternativeName>
        <fullName evidence="1">UPRTase</fullName>
    </alternativeName>
</protein>
<feature type="chain" id="PRO_1000164812" description="Uracil phosphoribosyltransferase">
    <location>
        <begin position="1"/>
        <end position="213"/>
    </location>
</feature>
<feature type="binding site" evidence="1">
    <location>
        <position position="78"/>
    </location>
    <ligand>
        <name>5-phospho-alpha-D-ribose 1-diphosphate</name>
        <dbReference type="ChEBI" id="CHEBI:58017"/>
    </ligand>
</feature>
<feature type="binding site" evidence="1">
    <location>
        <position position="103"/>
    </location>
    <ligand>
        <name>5-phospho-alpha-D-ribose 1-diphosphate</name>
        <dbReference type="ChEBI" id="CHEBI:58017"/>
    </ligand>
</feature>
<feature type="binding site" evidence="1">
    <location>
        <begin position="131"/>
        <end position="139"/>
    </location>
    <ligand>
        <name>5-phospho-alpha-D-ribose 1-diphosphate</name>
        <dbReference type="ChEBI" id="CHEBI:58017"/>
    </ligand>
</feature>
<feature type="binding site" evidence="1">
    <location>
        <position position="197"/>
    </location>
    <ligand>
        <name>uracil</name>
        <dbReference type="ChEBI" id="CHEBI:17568"/>
    </ligand>
</feature>
<feature type="binding site" evidence="1">
    <location>
        <begin position="202"/>
        <end position="204"/>
    </location>
    <ligand>
        <name>uracil</name>
        <dbReference type="ChEBI" id="CHEBI:17568"/>
    </ligand>
</feature>
<feature type="binding site" evidence="1">
    <location>
        <position position="203"/>
    </location>
    <ligand>
        <name>5-phospho-alpha-D-ribose 1-diphosphate</name>
        <dbReference type="ChEBI" id="CHEBI:58017"/>
    </ligand>
</feature>
<evidence type="ECO:0000255" key="1">
    <source>
        <dbReference type="HAMAP-Rule" id="MF_01218"/>
    </source>
</evidence>
<evidence type="ECO:0000305" key="2"/>
<dbReference type="EC" id="2.4.2.9" evidence="1"/>
<dbReference type="EMBL" id="CP001095">
    <property type="protein sequence ID" value="ACJ53421.1"/>
    <property type="molecule type" value="Genomic_DNA"/>
</dbReference>
<dbReference type="EMBL" id="AP010889">
    <property type="protein sequence ID" value="BAJ70013.1"/>
    <property type="status" value="ALT_INIT"/>
    <property type="molecule type" value="Genomic_DNA"/>
</dbReference>
<dbReference type="RefSeq" id="WP_012578588.1">
    <property type="nucleotide sequence ID" value="NC_011593.1"/>
</dbReference>
<dbReference type="SMR" id="B7GNR5"/>
<dbReference type="KEGG" id="bln:Blon_2363"/>
<dbReference type="KEGG" id="blon:BLIJ_2436"/>
<dbReference type="PATRIC" id="fig|391904.8.peg.2439"/>
<dbReference type="HOGENOM" id="CLU_067096_2_3_11"/>
<dbReference type="UniPathway" id="UPA00574">
    <property type="reaction ID" value="UER00636"/>
</dbReference>
<dbReference type="Proteomes" id="UP000001360">
    <property type="component" value="Chromosome"/>
</dbReference>
<dbReference type="GO" id="GO:0005525">
    <property type="term" value="F:GTP binding"/>
    <property type="evidence" value="ECO:0007669"/>
    <property type="project" value="UniProtKB-KW"/>
</dbReference>
<dbReference type="GO" id="GO:0000287">
    <property type="term" value="F:magnesium ion binding"/>
    <property type="evidence" value="ECO:0007669"/>
    <property type="project" value="UniProtKB-UniRule"/>
</dbReference>
<dbReference type="GO" id="GO:0004845">
    <property type="term" value="F:uracil phosphoribosyltransferase activity"/>
    <property type="evidence" value="ECO:0007669"/>
    <property type="project" value="UniProtKB-UniRule"/>
</dbReference>
<dbReference type="GO" id="GO:0044206">
    <property type="term" value="P:UMP salvage"/>
    <property type="evidence" value="ECO:0007669"/>
    <property type="project" value="UniProtKB-UniRule"/>
</dbReference>
<dbReference type="GO" id="GO:0006223">
    <property type="term" value="P:uracil salvage"/>
    <property type="evidence" value="ECO:0007669"/>
    <property type="project" value="InterPro"/>
</dbReference>
<dbReference type="CDD" id="cd06223">
    <property type="entry name" value="PRTases_typeI"/>
    <property type="match status" value="1"/>
</dbReference>
<dbReference type="FunFam" id="3.40.50.2020:FF:000003">
    <property type="entry name" value="Uracil phosphoribosyltransferase"/>
    <property type="match status" value="1"/>
</dbReference>
<dbReference type="Gene3D" id="3.40.50.2020">
    <property type="match status" value="1"/>
</dbReference>
<dbReference type="HAMAP" id="MF_01218_B">
    <property type="entry name" value="Upp_B"/>
    <property type="match status" value="1"/>
</dbReference>
<dbReference type="InterPro" id="IPR000836">
    <property type="entry name" value="PRibTrfase_dom"/>
</dbReference>
<dbReference type="InterPro" id="IPR029057">
    <property type="entry name" value="PRTase-like"/>
</dbReference>
<dbReference type="InterPro" id="IPR034332">
    <property type="entry name" value="Upp_B"/>
</dbReference>
<dbReference type="InterPro" id="IPR050054">
    <property type="entry name" value="UPRTase/APRTase"/>
</dbReference>
<dbReference type="InterPro" id="IPR005765">
    <property type="entry name" value="Ura_phspho_trans"/>
</dbReference>
<dbReference type="NCBIfam" id="NF001097">
    <property type="entry name" value="PRK00129.1"/>
    <property type="match status" value="1"/>
</dbReference>
<dbReference type="NCBIfam" id="TIGR01091">
    <property type="entry name" value="upp"/>
    <property type="match status" value="1"/>
</dbReference>
<dbReference type="PANTHER" id="PTHR32315">
    <property type="entry name" value="ADENINE PHOSPHORIBOSYLTRANSFERASE"/>
    <property type="match status" value="1"/>
</dbReference>
<dbReference type="PANTHER" id="PTHR32315:SF4">
    <property type="entry name" value="URACIL PHOSPHORIBOSYLTRANSFERASE, CHLOROPLASTIC"/>
    <property type="match status" value="1"/>
</dbReference>
<dbReference type="Pfam" id="PF14681">
    <property type="entry name" value="UPRTase"/>
    <property type="match status" value="1"/>
</dbReference>
<dbReference type="SUPFAM" id="SSF53271">
    <property type="entry name" value="PRTase-like"/>
    <property type="match status" value="1"/>
</dbReference>
<keyword id="KW-0021">Allosteric enzyme</keyword>
<keyword id="KW-0328">Glycosyltransferase</keyword>
<keyword id="KW-0342">GTP-binding</keyword>
<keyword id="KW-0460">Magnesium</keyword>
<keyword id="KW-0547">Nucleotide-binding</keyword>
<keyword id="KW-0808">Transferase</keyword>
<gene>
    <name evidence="1" type="primary">upp</name>
    <name type="ordered locus">Blon_2363</name>
    <name type="ordered locus">BLIJ_2436</name>
</gene>
<organism>
    <name type="scientific">Bifidobacterium longum subsp. infantis (strain ATCC 15697 / DSM 20088 / JCM 1222 / NCTC 11817 / S12)</name>
    <dbReference type="NCBI Taxonomy" id="391904"/>
    <lineage>
        <taxon>Bacteria</taxon>
        <taxon>Bacillati</taxon>
        <taxon>Actinomycetota</taxon>
        <taxon>Actinomycetes</taxon>
        <taxon>Bifidobacteriales</taxon>
        <taxon>Bifidobacteriaceae</taxon>
        <taxon>Bifidobacterium</taxon>
    </lineage>
</organism>
<name>UPP_BIFLS</name>
<accession>B7GNR5</accession>
<accession>E8MNZ7</accession>